<reference key="1">
    <citation type="journal article" date="2001" name="Oncogene">
        <title>Altered gene expression profile in chemically induced rat mammary adenocarcinomas and its modulation by an aromatase inhibitor.</title>
        <authorList>
            <person name="Wang Y."/>
            <person name="Hu L."/>
            <person name="Yao R."/>
            <person name="Wang M."/>
            <person name="Crist K.A."/>
            <person name="Grubbs C.J."/>
            <person name="Johanning G.L."/>
            <person name="Lubet R.A."/>
            <person name="You M."/>
        </authorList>
    </citation>
    <scope>NUCLEOTIDE SEQUENCE [MRNA]</scope>
    <scope>TISSUE SPECIFICITY</scope>
    <scope>INDUCTION</scope>
    <source>
        <strain>Sprague-Dawley</strain>
    </source>
</reference>
<evidence type="ECO:0000250" key="1">
    <source>
        <dbReference type="UniProtKB" id="Q64FW2"/>
    </source>
</evidence>
<evidence type="ECO:0000250" key="2">
    <source>
        <dbReference type="UniProtKB" id="Q8S4R4"/>
    </source>
</evidence>
<evidence type="ECO:0000255" key="3"/>
<evidence type="ECO:0000269" key="4">
    <source>
    </source>
</evidence>
<evidence type="ECO:0000305" key="5"/>
<proteinExistence type="evidence at transcript level"/>
<dbReference type="EC" id="1.3.99.23" evidence="1"/>
<dbReference type="EMBL" id="AF465614">
    <property type="protein sequence ID" value="AAL73494.1"/>
    <property type="molecule type" value="mRNA"/>
</dbReference>
<dbReference type="RefSeq" id="NP_659552.1">
    <property type="nucleotide sequence ID" value="NM_145084.1"/>
</dbReference>
<dbReference type="SMR" id="Q8VHE9"/>
<dbReference type="FunCoup" id="Q8VHE9">
    <property type="interactions" value="176"/>
</dbReference>
<dbReference type="STRING" id="10116.ENSRNOP00000019571"/>
<dbReference type="GlyGen" id="Q8VHE9">
    <property type="glycosylation" value="1 site"/>
</dbReference>
<dbReference type="iPTMnet" id="Q8VHE9"/>
<dbReference type="PhosphoSitePlus" id="Q8VHE9"/>
<dbReference type="jPOST" id="Q8VHE9"/>
<dbReference type="PaxDb" id="10116-ENSRNOP00000019571"/>
<dbReference type="GeneID" id="246298"/>
<dbReference type="KEGG" id="rno:246298"/>
<dbReference type="UCSC" id="RGD:628802">
    <property type="organism name" value="rat"/>
</dbReference>
<dbReference type="AGR" id="RGD:628802"/>
<dbReference type="CTD" id="54884"/>
<dbReference type="RGD" id="628802">
    <property type="gene designation" value="Retsat"/>
</dbReference>
<dbReference type="eggNOG" id="KOG4254">
    <property type="taxonomic scope" value="Eukaryota"/>
</dbReference>
<dbReference type="InParanoid" id="Q8VHE9"/>
<dbReference type="OrthoDB" id="59315at9989"/>
<dbReference type="PhylomeDB" id="Q8VHE9"/>
<dbReference type="PRO" id="PR:Q8VHE9"/>
<dbReference type="Proteomes" id="UP000002494">
    <property type="component" value="Unplaced"/>
</dbReference>
<dbReference type="GO" id="GO:0005789">
    <property type="term" value="C:endoplasmic reticulum membrane"/>
    <property type="evidence" value="ECO:0000250"/>
    <property type="project" value="HGNC-UCL"/>
</dbReference>
<dbReference type="GO" id="GO:0031965">
    <property type="term" value="C:nuclear membrane"/>
    <property type="evidence" value="ECO:0000250"/>
    <property type="project" value="HGNC-UCL"/>
</dbReference>
<dbReference type="GO" id="GO:0005640">
    <property type="term" value="C:nuclear outer membrane"/>
    <property type="evidence" value="ECO:0000250"/>
    <property type="project" value="HGNC-UCL"/>
</dbReference>
<dbReference type="GO" id="GO:0051786">
    <property type="term" value="F:all-trans-retinol 13,14-reductase activity"/>
    <property type="evidence" value="ECO:0000250"/>
    <property type="project" value="HGNC-UCL"/>
</dbReference>
<dbReference type="GO" id="GO:0001523">
    <property type="term" value="P:retinoid metabolic process"/>
    <property type="evidence" value="ECO:0000266"/>
    <property type="project" value="RGD"/>
</dbReference>
<dbReference type="GO" id="GO:0042572">
    <property type="term" value="P:retinol metabolic process"/>
    <property type="evidence" value="ECO:0000250"/>
    <property type="project" value="HGNC-UCL"/>
</dbReference>
<dbReference type="FunFam" id="3.50.50.60:FF:000139">
    <property type="entry name" value="All-trans-retinol 13,14-reductase"/>
    <property type="match status" value="1"/>
</dbReference>
<dbReference type="FunFam" id="3.50.50.60:FF:000178">
    <property type="entry name" value="All-trans-retinol 13,14-reductase"/>
    <property type="match status" value="1"/>
</dbReference>
<dbReference type="Gene3D" id="3.50.50.60">
    <property type="entry name" value="FAD/NAD(P)-binding domain"/>
    <property type="match status" value="2"/>
</dbReference>
<dbReference type="InterPro" id="IPR036188">
    <property type="entry name" value="FAD/NAD-bd_sf"/>
</dbReference>
<dbReference type="InterPro" id="IPR052206">
    <property type="entry name" value="Retinol_saturase"/>
</dbReference>
<dbReference type="PANTHER" id="PTHR46091:SF1">
    <property type="entry name" value="ALL-TRANS-RETINOL 13,14-REDUCTASE"/>
    <property type="match status" value="1"/>
</dbReference>
<dbReference type="PANTHER" id="PTHR46091">
    <property type="entry name" value="BLR7054 PROTEIN"/>
    <property type="match status" value="1"/>
</dbReference>
<dbReference type="Pfam" id="PF13450">
    <property type="entry name" value="NAD_binding_8"/>
    <property type="match status" value="1"/>
</dbReference>
<dbReference type="SUPFAM" id="SSF51905">
    <property type="entry name" value="FAD/NAD(P)-binding domain"/>
    <property type="match status" value="1"/>
</dbReference>
<accession>Q8VHE9</accession>
<comment type="function">
    <text evidence="1">Catalyzes the saturation of all-trans-retinol to all-trans-13,14-dihydroretinol. Does not exhibit any activity toward all-trans-retinoic acid, nor 9-cis, 11-cis or 13-cis-retinol isomers. May play a role in the metabolism of vitamin A. Independently of retinol conversion, may regulate liver metabolism upstream of MLXIPL/ChREBP. May play a role in adipocyte differentiation.</text>
</comment>
<comment type="catalytic activity">
    <reaction evidence="1">
        <text>all-trans-13,14-dihydroretinol + A = all-trans-retinol + AH2</text>
        <dbReference type="Rhea" id="RHEA:19193"/>
        <dbReference type="ChEBI" id="CHEBI:13193"/>
        <dbReference type="ChEBI" id="CHEBI:17336"/>
        <dbReference type="ChEBI" id="CHEBI:17499"/>
        <dbReference type="ChEBI" id="CHEBI:52075"/>
        <dbReference type="EC" id="1.3.99.23"/>
    </reaction>
</comment>
<comment type="cofactor">
    <cofactor evidence="2">
        <name>NAD(+)</name>
        <dbReference type="ChEBI" id="CHEBI:57540"/>
    </cofactor>
    <cofactor evidence="2">
        <name>NADP(+)</name>
        <dbReference type="ChEBI" id="CHEBI:58349"/>
    </cofactor>
    <cofactor evidence="2">
        <name>FAD</name>
        <dbReference type="ChEBI" id="CHEBI:57692"/>
    </cofactor>
</comment>
<comment type="subcellular location">
    <subcellularLocation>
        <location evidence="1">Endoplasmic reticulum membrane</location>
        <topology evidence="1">Peripheral membrane protein</topology>
    </subcellularLocation>
</comment>
<comment type="tissue specificity">
    <text evidence="4">Highly expressed in liver, kidney and heart.</text>
</comment>
<comment type="induction">
    <text evidence="4">Down-regulated in mammary adenocarcinomas.</text>
</comment>
<comment type="similarity">
    <text evidence="5">Belongs to the carotenoid/retinoid oxidoreductase family. CrtISO subfamily.</text>
</comment>
<gene>
    <name type="primary">Retsat</name>
    <name type="synonym">Ppsig</name>
    <name type="synonym">Rmt7</name>
</gene>
<name>RETST_RAT</name>
<sequence length="609" mass="67531">MWITALLLVVLLLVVVHRVYVGLFTGSSPNPFAEDVKRPPEPLVTDKEARKKVLKQAFSVSRVPEKLDAVVIGSGIGGLASAAVLAKAGKRVLVLEQHTKAGGCCHTFGENGLEFDTGIHYIGRMREGNIGRFILDQITEGQLDWAPMASPFDLMILEGPNGRKEFPMYSGRKEYIQGLKEKFPKEEAVIDKYMELVKVVAHGVSHAILLKFLPLPLTQLLNKFGLLTRFSPFCRASTQSLAEVLKQLGASPELQAVLSYILPTYGVTPSHTTFSLHALLVDHYIQGAYYPRRGSSEIAFHTIPLIQRAGGAVLTRATVQSVLLDSAGRACGVSVKKGQELVNIYCPVVISNAGMFNTYQHLLPESVRYLPDVKKQLTMVKPGLSMLSIFICLKGTKEELKLQSTNYYVYFDTDMDKAMECYVSMPKEKAPEHIPLLFIPFPSSKDPTWEDRFPDRSTMTVLVPTAFEWFEEWQEEPKGKRGVDYETLKNTFREASMSVIMKLFPQLEGKVESVTGGSPLTNQYYLAAHRGATYGADHDLARLHPHAMASLRAQTPIPNLYLTGQDIFTCGLMGALQGALLCSSAILKRNLYSDLQALGSKVRAQKKKK</sequence>
<keyword id="KW-0256">Endoplasmic reticulum</keyword>
<keyword id="KW-0274">FAD</keyword>
<keyword id="KW-0285">Flavoprotein</keyword>
<keyword id="KW-0443">Lipid metabolism</keyword>
<keyword id="KW-0472">Membrane</keyword>
<keyword id="KW-0520">NAD</keyword>
<keyword id="KW-0521">NADP</keyword>
<keyword id="KW-0560">Oxidoreductase</keyword>
<keyword id="KW-1185">Reference proteome</keyword>
<keyword id="KW-0732">Signal</keyword>
<feature type="signal peptide" evidence="3">
    <location>
        <begin position="1"/>
        <end position="21"/>
    </location>
</feature>
<feature type="chain" id="PRO_0000225668" description="All-trans-retinol 13,14-reductase">
    <location>
        <begin position="22"/>
        <end position="609"/>
    </location>
</feature>
<protein>
    <recommendedName>
        <fullName>All-trans-retinol 13,14-reductase</fullName>
        <ecNumber evidence="1">1.3.99.23</ecNumber>
    </recommendedName>
    <alternativeName>
        <fullName>All-trans-13,14-dihydroretinol saturase</fullName>
        <shortName>RetSat</shortName>
    </alternativeName>
    <alternativeName>
        <fullName>PPAR-alpha-regulated and starvation-induced gene protein</fullName>
    </alternativeName>
    <alternativeName>
        <fullName>RMT-7</fullName>
    </alternativeName>
</protein>
<organism>
    <name type="scientific">Rattus norvegicus</name>
    <name type="common">Rat</name>
    <dbReference type="NCBI Taxonomy" id="10116"/>
    <lineage>
        <taxon>Eukaryota</taxon>
        <taxon>Metazoa</taxon>
        <taxon>Chordata</taxon>
        <taxon>Craniata</taxon>
        <taxon>Vertebrata</taxon>
        <taxon>Euteleostomi</taxon>
        <taxon>Mammalia</taxon>
        <taxon>Eutheria</taxon>
        <taxon>Euarchontoglires</taxon>
        <taxon>Glires</taxon>
        <taxon>Rodentia</taxon>
        <taxon>Myomorpha</taxon>
        <taxon>Muroidea</taxon>
        <taxon>Muridae</taxon>
        <taxon>Murinae</taxon>
        <taxon>Rattus</taxon>
    </lineage>
</organism>